<proteinExistence type="inferred from homology"/>
<dbReference type="EC" id="5.4.99.12" evidence="1"/>
<dbReference type="EMBL" id="BA000012">
    <property type="protein sequence ID" value="BAB51416.1"/>
    <property type="molecule type" value="Genomic_DNA"/>
</dbReference>
<dbReference type="RefSeq" id="WP_010912757.1">
    <property type="nucleotide sequence ID" value="NC_002678.2"/>
</dbReference>
<dbReference type="SMR" id="Q98D55"/>
<dbReference type="KEGG" id="mlo:mll4852"/>
<dbReference type="PATRIC" id="fig|266835.9.peg.3833"/>
<dbReference type="eggNOG" id="COG0101">
    <property type="taxonomic scope" value="Bacteria"/>
</dbReference>
<dbReference type="HOGENOM" id="CLU_014673_0_2_5"/>
<dbReference type="Proteomes" id="UP000000552">
    <property type="component" value="Chromosome"/>
</dbReference>
<dbReference type="GO" id="GO:0003723">
    <property type="term" value="F:RNA binding"/>
    <property type="evidence" value="ECO:0007669"/>
    <property type="project" value="InterPro"/>
</dbReference>
<dbReference type="GO" id="GO:0160147">
    <property type="term" value="F:tRNA pseudouridine(38-40) synthase activity"/>
    <property type="evidence" value="ECO:0007669"/>
    <property type="project" value="UniProtKB-EC"/>
</dbReference>
<dbReference type="GO" id="GO:0031119">
    <property type="term" value="P:tRNA pseudouridine synthesis"/>
    <property type="evidence" value="ECO:0007669"/>
    <property type="project" value="UniProtKB-UniRule"/>
</dbReference>
<dbReference type="CDD" id="cd02570">
    <property type="entry name" value="PseudoU_synth_EcTruA"/>
    <property type="match status" value="1"/>
</dbReference>
<dbReference type="FunFam" id="3.30.70.580:FF:000001">
    <property type="entry name" value="tRNA pseudouridine synthase A"/>
    <property type="match status" value="1"/>
</dbReference>
<dbReference type="Gene3D" id="3.30.70.660">
    <property type="entry name" value="Pseudouridine synthase I, catalytic domain, C-terminal subdomain"/>
    <property type="match status" value="1"/>
</dbReference>
<dbReference type="Gene3D" id="3.30.70.580">
    <property type="entry name" value="Pseudouridine synthase I, catalytic domain, N-terminal subdomain"/>
    <property type="match status" value="1"/>
</dbReference>
<dbReference type="HAMAP" id="MF_00171">
    <property type="entry name" value="TruA"/>
    <property type="match status" value="1"/>
</dbReference>
<dbReference type="InterPro" id="IPR020103">
    <property type="entry name" value="PsdUridine_synth_cat_dom_sf"/>
</dbReference>
<dbReference type="InterPro" id="IPR001406">
    <property type="entry name" value="PsdUridine_synth_TruA"/>
</dbReference>
<dbReference type="InterPro" id="IPR020097">
    <property type="entry name" value="PsdUridine_synth_TruA_a/b_dom"/>
</dbReference>
<dbReference type="InterPro" id="IPR020095">
    <property type="entry name" value="PsdUridine_synth_TruA_C"/>
</dbReference>
<dbReference type="InterPro" id="IPR020094">
    <property type="entry name" value="TruA/RsuA/RluB/E/F_N"/>
</dbReference>
<dbReference type="NCBIfam" id="TIGR00071">
    <property type="entry name" value="hisT_truA"/>
    <property type="match status" value="1"/>
</dbReference>
<dbReference type="PANTHER" id="PTHR11142">
    <property type="entry name" value="PSEUDOURIDYLATE SYNTHASE"/>
    <property type="match status" value="1"/>
</dbReference>
<dbReference type="PANTHER" id="PTHR11142:SF0">
    <property type="entry name" value="TRNA PSEUDOURIDINE SYNTHASE-LIKE 1"/>
    <property type="match status" value="1"/>
</dbReference>
<dbReference type="Pfam" id="PF01416">
    <property type="entry name" value="PseudoU_synth_1"/>
    <property type="match status" value="2"/>
</dbReference>
<dbReference type="PIRSF" id="PIRSF001430">
    <property type="entry name" value="tRNA_psdUrid_synth"/>
    <property type="match status" value="1"/>
</dbReference>
<dbReference type="SUPFAM" id="SSF55120">
    <property type="entry name" value="Pseudouridine synthase"/>
    <property type="match status" value="1"/>
</dbReference>
<organism>
    <name type="scientific">Mesorhizobium japonicum (strain LMG 29417 / CECT 9101 / MAFF 303099)</name>
    <name type="common">Mesorhizobium loti (strain MAFF 303099)</name>
    <dbReference type="NCBI Taxonomy" id="266835"/>
    <lineage>
        <taxon>Bacteria</taxon>
        <taxon>Pseudomonadati</taxon>
        <taxon>Pseudomonadota</taxon>
        <taxon>Alphaproteobacteria</taxon>
        <taxon>Hyphomicrobiales</taxon>
        <taxon>Phyllobacteriaceae</taxon>
        <taxon>Mesorhizobium</taxon>
    </lineage>
</organism>
<comment type="function">
    <text evidence="1">Formation of pseudouridine at positions 38, 39 and 40 in the anticodon stem and loop of transfer RNAs.</text>
</comment>
<comment type="catalytic activity">
    <reaction evidence="1">
        <text>uridine(38/39/40) in tRNA = pseudouridine(38/39/40) in tRNA</text>
        <dbReference type="Rhea" id="RHEA:22376"/>
        <dbReference type="Rhea" id="RHEA-COMP:10085"/>
        <dbReference type="Rhea" id="RHEA-COMP:10087"/>
        <dbReference type="ChEBI" id="CHEBI:65314"/>
        <dbReference type="ChEBI" id="CHEBI:65315"/>
        <dbReference type="EC" id="5.4.99.12"/>
    </reaction>
</comment>
<comment type="subunit">
    <text evidence="1">Homodimer.</text>
</comment>
<comment type="similarity">
    <text evidence="1">Belongs to the tRNA pseudouridine synthase TruA family.</text>
</comment>
<keyword id="KW-0413">Isomerase</keyword>
<keyword id="KW-0819">tRNA processing</keyword>
<sequence>MPRFRLDIEYDGSLFAGWQHQADQPSVQQAIEQAIEKFCGEAVRLRAAGRTDAGVHASAQVAHVDLAKPWPGDKVRDAVNAHLQAAGAHVAILKAAIVPDDFDARFSATGRHYLYRILNRRAPAALEKGKVWWVPKRLDAGAMHEAAKLLLGRHDFTTFRSTQCQANSPVRTLERLDVSRAGDMIEVRASARSFLHNQVRSMVGSLKRVGDGGWTEAELKAALEARDRAACGQVAPPDGLFLIGVDYP</sequence>
<feature type="chain" id="PRO_0000057436" description="tRNA pseudouridine synthase A">
    <location>
        <begin position="1"/>
        <end position="248"/>
    </location>
</feature>
<feature type="active site" description="Nucleophile" evidence="1">
    <location>
        <position position="52"/>
    </location>
</feature>
<feature type="binding site" evidence="1">
    <location>
        <position position="113"/>
    </location>
    <ligand>
        <name>substrate</name>
    </ligand>
</feature>
<accession>Q98D55</accession>
<name>TRUA_RHILO</name>
<evidence type="ECO:0000255" key="1">
    <source>
        <dbReference type="HAMAP-Rule" id="MF_00171"/>
    </source>
</evidence>
<protein>
    <recommendedName>
        <fullName evidence="1">tRNA pseudouridine synthase A</fullName>
        <ecNumber evidence="1">5.4.99.12</ecNumber>
    </recommendedName>
    <alternativeName>
        <fullName evidence="1">tRNA pseudouridine(38-40) synthase</fullName>
    </alternativeName>
    <alternativeName>
        <fullName evidence="1">tRNA pseudouridylate synthase I</fullName>
    </alternativeName>
    <alternativeName>
        <fullName evidence="1">tRNA-uridine isomerase I</fullName>
    </alternativeName>
</protein>
<reference key="1">
    <citation type="journal article" date="2000" name="DNA Res.">
        <title>Complete genome structure of the nitrogen-fixing symbiotic bacterium Mesorhizobium loti.</title>
        <authorList>
            <person name="Kaneko T."/>
            <person name="Nakamura Y."/>
            <person name="Sato S."/>
            <person name="Asamizu E."/>
            <person name="Kato T."/>
            <person name="Sasamoto S."/>
            <person name="Watanabe A."/>
            <person name="Idesawa K."/>
            <person name="Ishikawa A."/>
            <person name="Kawashima K."/>
            <person name="Kimura T."/>
            <person name="Kishida Y."/>
            <person name="Kiyokawa C."/>
            <person name="Kohara M."/>
            <person name="Matsumoto M."/>
            <person name="Matsuno A."/>
            <person name="Mochizuki Y."/>
            <person name="Nakayama S."/>
            <person name="Nakazaki N."/>
            <person name="Shimpo S."/>
            <person name="Sugimoto M."/>
            <person name="Takeuchi C."/>
            <person name="Yamada M."/>
            <person name="Tabata S."/>
        </authorList>
    </citation>
    <scope>NUCLEOTIDE SEQUENCE [LARGE SCALE GENOMIC DNA]</scope>
    <source>
        <strain>LMG 29417 / CECT 9101 / MAFF 303099</strain>
    </source>
</reference>
<gene>
    <name evidence="1" type="primary">truA</name>
    <name type="ordered locus">mll4852</name>
</gene>